<comment type="function">
    <text evidence="1">Catalyzes the formation of 6,7-dimethyl-8-ribityllumazine by condensation of 5-amino-6-(D-ribitylamino)uracil with 3,4-dihydroxy-2-butanone 4-phosphate. This is the penultimate step in the biosynthesis of riboflavin.</text>
</comment>
<comment type="catalytic activity">
    <reaction evidence="1">
        <text>(2S)-2-hydroxy-3-oxobutyl phosphate + 5-amino-6-(D-ribitylamino)uracil = 6,7-dimethyl-8-(1-D-ribityl)lumazine + phosphate + 2 H2O + H(+)</text>
        <dbReference type="Rhea" id="RHEA:26152"/>
        <dbReference type="ChEBI" id="CHEBI:15377"/>
        <dbReference type="ChEBI" id="CHEBI:15378"/>
        <dbReference type="ChEBI" id="CHEBI:15934"/>
        <dbReference type="ChEBI" id="CHEBI:43474"/>
        <dbReference type="ChEBI" id="CHEBI:58201"/>
        <dbReference type="ChEBI" id="CHEBI:58830"/>
        <dbReference type="EC" id="2.5.1.78"/>
    </reaction>
</comment>
<comment type="pathway">
    <text evidence="1">Cofactor biosynthesis; riboflavin biosynthesis; riboflavin from 2-hydroxy-3-oxobutyl phosphate and 5-amino-6-(D-ribitylamino)uracil: step 1/2.</text>
</comment>
<comment type="subunit">
    <text evidence="1">Forms an icosahedral capsid composed of 60 subunits, arranged as a dodecamer of pentamers.</text>
</comment>
<comment type="similarity">
    <text evidence="1">Belongs to the DMRL synthase family.</text>
</comment>
<organism>
    <name type="scientific">Shewanella piezotolerans (strain WP3 / JCM 13877)</name>
    <dbReference type="NCBI Taxonomy" id="225849"/>
    <lineage>
        <taxon>Bacteria</taxon>
        <taxon>Pseudomonadati</taxon>
        <taxon>Pseudomonadota</taxon>
        <taxon>Gammaproteobacteria</taxon>
        <taxon>Alteromonadales</taxon>
        <taxon>Shewanellaceae</taxon>
        <taxon>Shewanella</taxon>
    </lineage>
</organism>
<keyword id="KW-0686">Riboflavin biosynthesis</keyword>
<keyword id="KW-0808">Transferase</keyword>
<feature type="chain" id="PRO_1000118423" description="6,7-dimethyl-8-ribityllumazine synthase">
    <location>
        <begin position="1"/>
        <end position="158"/>
    </location>
</feature>
<feature type="active site" description="Proton donor" evidence="1">
    <location>
        <position position="89"/>
    </location>
</feature>
<feature type="binding site" evidence="1">
    <location>
        <position position="22"/>
    </location>
    <ligand>
        <name>5-amino-6-(D-ribitylamino)uracil</name>
        <dbReference type="ChEBI" id="CHEBI:15934"/>
    </ligand>
</feature>
<feature type="binding site" evidence="1">
    <location>
        <begin position="57"/>
        <end position="59"/>
    </location>
    <ligand>
        <name>5-amino-6-(D-ribitylamino)uracil</name>
        <dbReference type="ChEBI" id="CHEBI:15934"/>
    </ligand>
</feature>
<feature type="binding site" evidence="1">
    <location>
        <begin position="81"/>
        <end position="83"/>
    </location>
    <ligand>
        <name>5-amino-6-(D-ribitylamino)uracil</name>
        <dbReference type="ChEBI" id="CHEBI:15934"/>
    </ligand>
</feature>
<feature type="binding site" evidence="1">
    <location>
        <begin position="86"/>
        <end position="87"/>
    </location>
    <ligand>
        <name>(2S)-2-hydroxy-3-oxobutyl phosphate</name>
        <dbReference type="ChEBI" id="CHEBI:58830"/>
    </ligand>
</feature>
<feature type="binding site" evidence="1">
    <location>
        <position position="114"/>
    </location>
    <ligand>
        <name>5-amino-6-(D-ribitylamino)uracil</name>
        <dbReference type="ChEBI" id="CHEBI:15934"/>
    </ligand>
</feature>
<feature type="binding site" evidence="1">
    <location>
        <position position="128"/>
    </location>
    <ligand>
        <name>(2S)-2-hydroxy-3-oxobutyl phosphate</name>
        <dbReference type="ChEBI" id="CHEBI:58830"/>
    </ligand>
</feature>
<dbReference type="EC" id="2.5.1.78" evidence="1"/>
<dbReference type="EMBL" id="CP000472">
    <property type="protein sequence ID" value="ACJ28129.1"/>
    <property type="molecule type" value="Genomic_DNA"/>
</dbReference>
<dbReference type="SMR" id="B8CJN2"/>
<dbReference type="STRING" id="225849.swp_1342"/>
<dbReference type="KEGG" id="swp:swp_1342"/>
<dbReference type="eggNOG" id="COG0054">
    <property type="taxonomic scope" value="Bacteria"/>
</dbReference>
<dbReference type="HOGENOM" id="CLU_089358_1_1_6"/>
<dbReference type="OrthoDB" id="9809709at2"/>
<dbReference type="UniPathway" id="UPA00275">
    <property type="reaction ID" value="UER00404"/>
</dbReference>
<dbReference type="Proteomes" id="UP000000753">
    <property type="component" value="Chromosome"/>
</dbReference>
<dbReference type="GO" id="GO:0005829">
    <property type="term" value="C:cytosol"/>
    <property type="evidence" value="ECO:0007669"/>
    <property type="project" value="TreeGrafter"/>
</dbReference>
<dbReference type="GO" id="GO:0009349">
    <property type="term" value="C:riboflavin synthase complex"/>
    <property type="evidence" value="ECO:0007669"/>
    <property type="project" value="InterPro"/>
</dbReference>
<dbReference type="GO" id="GO:0000906">
    <property type="term" value="F:6,7-dimethyl-8-ribityllumazine synthase activity"/>
    <property type="evidence" value="ECO:0007669"/>
    <property type="project" value="UniProtKB-UniRule"/>
</dbReference>
<dbReference type="GO" id="GO:0009231">
    <property type="term" value="P:riboflavin biosynthetic process"/>
    <property type="evidence" value="ECO:0007669"/>
    <property type="project" value="UniProtKB-UniRule"/>
</dbReference>
<dbReference type="CDD" id="cd09209">
    <property type="entry name" value="Lumazine_synthase-I"/>
    <property type="match status" value="1"/>
</dbReference>
<dbReference type="FunFam" id="3.40.50.960:FF:000001">
    <property type="entry name" value="6,7-dimethyl-8-ribityllumazine synthase"/>
    <property type="match status" value="1"/>
</dbReference>
<dbReference type="Gene3D" id="3.40.50.960">
    <property type="entry name" value="Lumazine/riboflavin synthase"/>
    <property type="match status" value="1"/>
</dbReference>
<dbReference type="HAMAP" id="MF_00178">
    <property type="entry name" value="Lumazine_synth"/>
    <property type="match status" value="1"/>
</dbReference>
<dbReference type="InterPro" id="IPR034964">
    <property type="entry name" value="LS"/>
</dbReference>
<dbReference type="InterPro" id="IPR002180">
    <property type="entry name" value="LS/RS"/>
</dbReference>
<dbReference type="InterPro" id="IPR036467">
    <property type="entry name" value="LS/RS_sf"/>
</dbReference>
<dbReference type="NCBIfam" id="TIGR00114">
    <property type="entry name" value="lumazine-synth"/>
    <property type="match status" value="1"/>
</dbReference>
<dbReference type="NCBIfam" id="NF000812">
    <property type="entry name" value="PRK00061.1-4"/>
    <property type="match status" value="1"/>
</dbReference>
<dbReference type="PANTHER" id="PTHR21058:SF0">
    <property type="entry name" value="6,7-DIMETHYL-8-RIBITYLLUMAZINE SYNTHASE"/>
    <property type="match status" value="1"/>
</dbReference>
<dbReference type="PANTHER" id="PTHR21058">
    <property type="entry name" value="6,7-DIMETHYL-8-RIBITYLLUMAZINE SYNTHASE DMRL SYNTHASE LUMAZINE SYNTHASE"/>
    <property type="match status" value="1"/>
</dbReference>
<dbReference type="Pfam" id="PF00885">
    <property type="entry name" value="DMRL_synthase"/>
    <property type="match status" value="1"/>
</dbReference>
<dbReference type="SUPFAM" id="SSF52121">
    <property type="entry name" value="Lumazine synthase"/>
    <property type="match status" value="1"/>
</dbReference>
<protein>
    <recommendedName>
        <fullName evidence="1">6,7-dimethyl-8-ribityllumazine synthase</fullName>
        <shortName evidence="1">DMRL synthase</shortName>
        <shortName evidence="1">LS</shortName>
        <shortName evidence="1">Lumazine synthase</shortName>
        <ecNumber evidence="1">2.5.1.78</ecNumber>
    </recommendedName>
</protein>
<gene>
    <name evidence="1" type="primary">ribH</name>
    <name type="ordered locus">swp_1342</name>
</gene>
<accession>B8CJN2</accession>
<proteinExistence type="inferred from homology"/>
<name>RISB_SHEPW</name>
<sequence length="158" mass="16533">MNVVQGNIESKNAKIAIVVSRFNSFVVESLLDGAVDTLKRFGQVADDNITVIKVPGAVELPLAARRVAASGKFDGIISLGAVIRGGTPHFDLVAGECNKGLAQVALEYDIPVSFGVLTTDTIEQAIERSGTKAGNKGGEAALGLLEMVNVLQALEEQL</sequence>
<reference key="1">
    <citation type="journal article" date="2008" name="PLoS ONE">
        <title>Environmental adaptation: genomic analysis of the piezotolerant and psychrotolerant deep-sea iron reducing bacterium Shewanella piezotolerans WP3.</title>
        <authorList>
            <person name="Wang F."/>
            <person name="Wang J."/>
            <person name="Jian H."/>
            <person name="Zhang B."/>
            <person name="Li S."/>
            <person name="Wang F."/>
            <person name="Zeng X."/>
            <person name="Gao L."/>
            <person name="Bartlett D.H."/>
            <person name="Yu J."/>
            <person name="Hu S."/>
            <person name="Xiao X."/>
        </authorList>
    </citation>
    <scope>NUCLEOTIDE SEQUENCE [LARGE SCALE GENOMIC DNA]</scope>
    <source>
        <strain>WP3 / JCM 13877</strain>
    </source>
</reference>
<evidence type="ECO:0000255" key="1">
    <source>
        <dbReference type="HAMAP-Rule" id="MF_00178"/>
    </source>
</evidence>